<evidence type="ECO:0000250" key="1">
    <source>
        <dbReference type="UniProtKB" id="P40547"/>
    </source>
</evidence>
<evidence type="ECO:0000255" key="2"/>
<evidence type="ECO:0000269" key="3">
    <source>
    </source>
</evidence>
<evidence type="ECO:0000305" key="4"/>
<evidence type="ECO:0000312" key="5">
    <source>
        <dbReference type="PomBase" id="SPAC26H5.04"/>
    </source>
</evidence>
<organism>
    <name type="scientific">Schizosaccharomyces pombe (strain 972 / ATCC 24843)</name>
    <name type="common">Fission yeast</name>
    <dbReference type="NCBI Taxonomy" id="284812"/>
    <lineage>
        <taxon>Eukaryota</taxon>
        <taxon>Fungi</taxon>
        <taxon>Dikarya</taxon>
        <taxon>Ascomycota</taxon>
        <taxon>Taphrinomycotina</taxon>
        <taxon>Schizosaccharomycetes</taxon>
        <taxon>Schizosaccharomycetales</taxon>
        <taxon>Schizosaccharomycetaceae</taxon>
        <taxon>Schizosaccharomyces</taxon>
    </lineage>
</organism>
<comment type="function">
    <text evidence="1">Component of the GID E3 ligase complex recruiting N termini and catalyzing ubiquitination of proteins targeted for degradation. GID E3 is regulated through assembly with interchangeable N-degron-binding substrate receptors induced by distinct environmental perturbations. Required for the adaptation to the presence of glucose in the growth medium; mediates in association with the substrate receptor VID24/GID4 the degradation of enzymes involved in gluconeogenesis when cells are shifted to glucose-containing medium.</text>
</comment>
<comment type="subunit">
    <text evidence="1">Identified in the GID/CTLH complex. In the absence of stress, the complex exists as an inactive anticipatory complex (GID(Ant)), composed of Gid1, the E3 ubiquitin-ligase Gid2, Gid5, Gid8, and the RING-like subunit Gid9, awaiting a substrate receptor to form the active E3 ligase complex. When cells are shifted to glucose-containing medium, the substrate receptor Gid4 is induced and becomes part of the complex, named GID(SR4). Additionally, Gid7 transforms the GID(SR4) E3 ligase core into a higher-order supramolecular assembly (Chelator-GID(SR4)). Under osmotic or heat stress, the substrate receptor Gid10 is induced and becomes part of the complex, named GID(SR10).</text>
</comment>
<comment type="subcellular location">
    <subcellularLocation>
        <location evidence="3">Cytoplasm</location>
    </subcellularLocation>
    <subcellularLocation>
        <location evidence="3">Nucleus</location>
    </subcellularLocation>
</comment>
<comment type="similarity">
    <text evidence="4">Belongs to the VID28/GID5 family.</text>
</comment>
<name>GID5_SCHPO</name>
<accession>O13986</accession>
<accession>Q9US17</accession>
<keyword id="KW-0963">Cytoplasm</keyword>
<keyword id="KW-0539">Nucleus</keyword>
<keyword id="KW-1185">Reference proteome</keyword>
<keyword id="KW-0677">Repeat</keyword>
<gene>
    <name type="primary">gid5</name>
    <name evidence="5" type="ORF">SPAC26H5.04</name>
</gene>
<sequence>MVAINDSTDSSFFKENPKIFKDEHELLRYIVPFKNWVIGRPDRKEYAIRNGAPKLLLNLFSLENLSMNEKYQVFVVLNSLMSEDQDPFVQFLRHEDLLSVMQMISKRDSTPYGMLNITLKVFNTMLSFDKAAEYVTQLHSDSIINQMFDLYTLPLKEQPSLDVLRISNLSSKILHRLILYNSKVGDSPRFCSALFQITNRATQLRLYSRRRFWNDCSILITNSLGTLNAYLKQHVKSYKQREKTRLESNGHVSPRDMDLDEIENVFEGNKDKVALFKSEIFGPNGDEYITQLFCLVRQFDPCIRLLSISCLVTLYKAGILSKNQTKEIQMIVTPILIRLFFESREAKQIAPRILAIIINENEIMQKTAVNAGFIDAAKYLLEYATKEEENEINFLSDELQSSVCFNLPATKKEQKNLILESVLLAVAALTTSKDEYRKLIVDAKYLPVIINALKINSNSVKKAACECLLSLSRSVYILRTGLADADVSEPLIKLLSDPDTRVKSTATSAICNLVLKFSPLREKFLTTNFIDTLISNISTKDSSLRKKTVWVLRHVVFGDDETIQLEPLKKIGASKLVELCNDEDLGVQEQMLQVLRNFTCQKEESVDFLLKMVPMELLAKILLEKLESKNPILIEPSIYILVHIAASDGELRDSILRQTKLLLLVKEIMLQEAQRLKPEQMSTNVSSPESDSEMDLQEDDFDREMRPPFDIYEEDTYEPNSEILLAGIWLCINILWPKQCTSPSQEDKERASILQNLGFGECLQMLQNHSSPDVRERVKDALMYINVTD</sequence>
<dbReference type="EMBL" id="CU329670">
    <property type="protein sequence ID" value="CAB66097.2"/>
    <property type="molecule type" value="Genomic_DNA"/>
</dbReference>
<dbReference type="RefSeq" id="NP_594451.2">
    <property type="nucleotide sequence ID" value="NM_001019880.3"/>
</dbReference>
<dbReference type="SMR" id="O13986"/>
<dbReference type="BioGRID" id="278558">
    <property type="interactions" value="17"/>
</dbReference>
<dbReference type="FunCoup" id="O13986">
    <property type="interactions" value="288"/>
</dbReference>
<dbReference type="STRING" id="284812.O13986"/>
<dbReference type="iPTMnet" id="O13986"/>
<dbReference type="PaxDb" id="4896-SPAC26H5.04.1"/>
<dbReference type="EnsemblFungi" id="SPAC26H5.04.1">
    <property type="protein sequence ID" value="SPAC26H5.04.1:pep"/>
    <property type="gene ID" value="SPAC26H5.04"/>
</dbReference>
<dbReference type="GeneID" id="2542081"/>
<dbReference type="KEGG" id="spo:2542081"/>
<dbReference type="PomBase" id="SPAC26H5.04">
    <property type="gene designation" value="gid5"/>
</dbReference>
<dbReference type="VEuPathDB" id="FungiDB:SPAC26H5.04"/>
<dbReference type="eggNOG" id="KOG1293">
    <property type="taxonomic scope" value="Eukaryota"/>
</dbReference>
<dbReference type="HOGENOM" id="CLU_373909_0_0_1"/>
<dbReference type="InParanoid" id="O13986"/>
<dbReference type="OMA" id="KYEVFIV"/>
<dbReference type="PhylomeDB" id="O13986"/>
<dbReference type="Reactome" id="R-SPO-6798695">
    <property type="pathway name" value="Neutrophil degranulation"/>
</dbReference>
<dbReference type="Reactome" id="R-SPO-9861718">
    <property type="pathway name" value="Regulation of pyruvate metabolism"/>
</dbReference>
<dbReference type="PRO" id="PR:O13986"/>
<dbReference type="Proteomes" id="UP000002485">
    <property type="component" value="Chromosome I"/>
</dbReference>
<dbReference type="GO" id="GO:0005829">
    <property type="term" value="C:cytosol"/>
    <property type="evidence" value="ECO:0007005"/>
    <property type="project" value="PomBase"/>
</dbReference>
<dbReference type="GO" id="GO:0034657">
    <property type="term" value="C:GID complex"/>
    <property type="evidence" value="ECO:0000318"/>
    <property type="project" value="GO_Central"/>
</dbReference>
<dbReference type="GO" id="GO:0005634">
    <property type="term" value="C:nucleus"/>
    <property type="evidence" value="ECO:0007005"/>
    <property type="project" value="PomBase"/>
</dbReference>
<dbReference type="GO" id="GO:0045721">
    <property type="term" value="P:negative regulation of gluconeogenesis"/>
    <property type="evidence" value="ECO:0000266"/>
    <property type="project" value="PomBase"/>
</dbReference>
<dbReference type="GO" id="GO:0043161">
    <property type="term" value="P:proteasome-mediated ubiquitin-dependent protein catabolic process"/>
    <property type="evidence" value="ECO:0000318"/>
    <property type="project" value="GO_Central"/>
</dbReference>
<dbReference type="Gene3D" id="1.25.10.10">
    <property type="entry name" value="Leucine-rich Repeat Variant"/>
    <property type="match status" value="1"/>
</dbReference>
<dbReference type="InterPro" id="IPR011989">
    <property type="entry name" value="ARM-like"/>
</dbReference>
<dbReference type="InterPro" id="IPR016024">
    <property type="entry name" value="ARM-type_fold"/>
</dbReference>
<dbReference type="InterPro" id="IPR000225">
    <property type="entry name" value="Armadillo"/>
</dbReference>
<dbReference type="InterPro" id="IPR038739">
    <property type="entry name" value="ARMC8/Vid28"/>
</dbReference>
<dbReference type="PANTHER" id="PTHR15651">
    <property type="entry name" value="ARMADILLO REPEAT-CONTAINING PROTEIN 8"/>
    <property type="match status" value="1"/>
</dbReference>
<dbReference type="PANTHER" id="PTHR15651:SF7">
    <property type="entry name" value="ARMADILLO REPEAT-CONTAINING PROTEIN 8"/>
    <property type="match status" value="1"/>
</dbReference>
<dbReference type="Pfam" id="PF00514">
    <property type="entry name" value="Arm"/>
    <property type="match status" value="1"/>
</dbReference>
<dbReference type="SMART" id="SM00185">
    <property type="entry name" value="ARM"/>
    <property type="match status" value="3"/>
</dbReference>
<dbReference type="SUPFAM" id="SSF48371">
    <property type="entry name" value="ARM repeat"/>
    <property type="match status" value="1"/>
</dbReference>
<protein>
    <recommendedName>
        <fullName>GID complex subunit 5</fullName>
    </recommendedName>
    <alternativeName>
        <fullName>Glucose-induced degradation protein 5</fullName>
    </alternativeName>
</protein>
<reference key="1">
    <citation type="journal article" date="2002" name="Nature">
        <title>The genome sequence of Schizosaccharomyces pombe.</title>
        <authorList>
            <person name="Wood V."/>
            <person name="Gwilliam R."/>
            <person name="Rajandream M.A."/>
            <person name="Lyne M.H."/>
            <person name="Lyne R."/>
            <person name="Stewart A."/>
            <person name="Sgouros J.G."/>
            <person name="Peat N."/>
            <person name="Hayles J."/>
            <person name="Baker S.G."/>
            <person name="Basham D."/>
            <person name="Bowman S."/>
            <person name="Brooks K."/>
            <person name="Brown D."/>
            <person name="Brown S."/>
            <person name="Chillingworth T."/>
            <person name="Churcher C.M."/>
            <person name="Collins M."/>
            <person name="Connor R."/>
            <person name="Cronin A."/>
            <person name="Davis P."/>
            <person name="Feltwell T."/>
            <person name="Fraser A."/>
            <person name="Gentles S."/>
            <person name="Goble A."/>
            <person name="Hamlin N."/>
            <person name="Harris D.E."/>
            <person name="Hidalgo J."/>
            <person name="Hodgson G."/>
            <person name="Holroyd S."/>
            <person name="Hornsby T."/>
            <person name="Howarth S."/>
            <person name="Huckle E.J."/>
            <person name="Hunt S."/>
            <person name="Jagels K."/>
            <person name="James K.D."/>
            <person name="Jones L."/>
            <person name="Jones M."/>
            <person name="Leather S."/>
            <person name="McDonald S."/>
            <person name="McLean J."/>
            <person name="Mooney P."/>
            <person name="Moule S."/>
            <person name="Mungall K.L."/>
            <person name="Murphy L.D."/>
            <person name="Niblett D."/>
            <person name="Odell C."/>
            <person name="Oliver K."/>
            <person name="O'Neil S."/>
            <person name="Pearson D."/>
            <person name="Quail M.A."/>
            <person name="Rabbinowitsch E."/>
            <person name="Rutherford K.M."/>
            <person name="Rutter S."/>
            <person name="Saunders D."/>
            <person name="Seeger K."/>
            <person name="Sharp S."/>
            <person name="Skelton J."/>
            <person name="Simmonds M.N."/>
            <person name="Squares R."/>
            <person name="Squares S."/>
            <person name="Stevens K."/>
            <person name="Taylor K."/>
            <person name="Taylor R.G."/>
            <person name="Tivey A."/>
            <person name="Walsh S.V."/>
            <person name="Warren T."/>
            <person name="Whitehead S."/>
            <person name="Woodward J.R."/>
            <person name="Volckaert G."/>
            <person name="Aert R."/>
            <person name="Robben J."/>
            <person name="Grymonprez B."/>
            <person name="Weltjens I."/>
            <person name="Vanstreels E."/>
            <person name="Rieger M."/>
            <person name="Schaefer M."/>
            <person name="Mueller-Auer S."/>
            <person name="Gabel C."/>
            <person name="Fuchs M."/>
            <person name="Duesterhoeft A."/>
            <person name="Fritzc C."/>
            <person name="Holzer E."/>
            <person name="Moestl D."/>
            <person name="Hilbert H."/>
            <person name="Borzym K."/>
            <person name="Langer I."/>
            <person name="Beck A."/>
            <person name="Lehrach H."/>
            <person name="Reinhardt R."/>
            <person name="Pohl T.M."/>
            <person name="Eger P."/>
            <person name="Zimmermann W."/>
            <person name="Wedler H."/>
            <person name="Wambutt R."/>
            <person name="Purnelle B."/>
            <person name="Goffeau A."/>
            <person name="Cadieu E."/>
            <person name="Dreano S."/>
            <person name="Gloux S."/>
            <person name="Lelaure V."/>
            <person name="Mottier S."/>
            <person name="Galibert F."/>
            <person name="Aves S.J."/>
            <person name="Xiang Z."/>
            <person name="Hunt C."/>
            <person name="Moore K."/>
            <person name="Hurst S.M."/>
            <person name="Lucas M."/>
            <person name="Rochet M."/>
            <person name="Gaillardin C."/>
            <person name="Tallada V.A."/>
            <person name="Garzon A."/>
            <person name="Thode G."/>
            <person name="Daga R.R."/>
            <person name="Cruzado L."/>
            <person name="Jimenez J."/>
            <person name="Sanchez M."/>
            <person name="del Rey F."/>
            <person name="Benito J."/>
            <person name="Dominguez A."/>
            <person name="Revuelta J.L."/>
            <person name="Moreno S."/>
            <person name="Armstrong J."/>
            <person name="Forsburg S.L."/>
            <person name="Cerutti L."/>
            <person name="Lowe T."/>
            <person name="McCombie W.R."/>
            <person name="Paulsen I."/>
            <person name="Potashkin J."/>
            <person name="Shpakovski G.V."/>
            <person name="Ussery D."/>
            <person name="Barrell B.G."/>
            <person name="Nurse P."/>
        </authorList>
    </citation>
    <scope>NUCLEOTIDE SEQUENCE [LARGE SCALE GENOMIC DNA]</scope>
    <source>
        <strain>972 / ATCC 24843</strain>
    </source>
</reference>
<reference key="2">
    <citation type="journal article" date="2006" name="Nat. Biotechnol.">
        <title>ORFeome cloning and global analysis of protein localization in the fission yeast Schizosaccharomyces pombe.</title>
        <authorList>
            <person name="Matsuyama A."/>
            <person name="Arai R."/>
            <person name="Yashiroda Y."/>
            <person name="Shirai A."/>
            <person name="Kamata A."/>
            <person name="Sekido S."/>
            <person name="Kobayashi Y."/>
            <person name="Hashimoto A."/>
            <person name="Hamamoto M."/>
            <person name="Hiraoka Y."/>
            <person name="Horinouchi S."/>
            <person name="Yoshida M."/>
        </authorList>
    </citation>
    <scope>SUBCELLULAR LOCATION [LARGE SCALE ANALYSIS]</scope>
</reference>
<feature type="chain" id="PRO_0000352824" description="GID complex subunit 5">
    <location>
        <begin position="1"/>
        <end position="789"/>
    </location>
</feature>
<feature type="repeat" description="ARM 1" evidence="2">
    <location>
        <begin position="434"/>
        <end position="473"/>
    </location>
</feature>
<feature type="repeat" description="ARM 2" evidence="2">
    <location>
        <begin position="476"/>
        <end position="515"/>
    </location>
</feature>
<feature type="repeat" description="ARM 3" evidence="2">
    <location>
        <begin position="518"/>
        <end position="557"/>
    </location>
</feature>
<feature type="repeat" description="ARM 4" evidence="2">
    <location>
        <begin position="562"/>
        <end position="600"/>
    </location>
</feature>
<feature type="repeat" description="ARM 5" evidence="2">
    <location>
        <begin position="603"/>
        <end position="646"/>
    </location>
</feature>
<proteinExistence type="inferred from homology"/>